<feature type="chain" id="PRO_0000172561" description="Phosphatidylglycerol--prolipoprotein diacylglyceryl transferase">
    <location>
        <begin position="1"/>
        <end position="315"/>
    </location>
</feature>
<feature type="transmembrane region" description="Helical" evidence="1">
    <location>
        <begin position="19"/>
        <end position="39"/>
    </location>
</feature>
<feature type="transmembrane region" description="Helical" evidence="1">
    <location>
        <begin position="93"/>
        <end position="113"/>
    </location>
</feature>
<feature type="transmembrane region" description="Helical" evidence="1">
    <location>
        <begin position="188"/>
        <end position="208"/>
    </location>
</feature>
<feature type="transmembrane region" description="Helical" evidence="1">
    <location>
        <begin position="256"/>
        <end position="276"/>
    </location>
</feature>
<feature type="binding site" evidence="1">
    <location>
        <position position="141"/>
    </location>
    <ligand>
        <name>a 1,2-diacyl-sn-glycero-3-phospho-(1'-sn-glycerol)</name>
        <dbReference type="ChEBI" id="CHEBI:64716"/>
    </ligand>
</feature>
<reference key="1">
    <citation type="journal article" date="2002" name="Proc. Natl. Acad. Sci. U.S.A.">
        <title>The genome sequence of Bifidobacterium longum reflects its adaptation to the human gastrointestinal tract.</title>
        <authorList>
            <person name="Schell M.A."/>
            <person name="Karmirantzou M."/>
            <person name="Snel B."/>
            <person name="Vilanova D."/>
            <person name="Berger B."/>
            <person name="Pessi G."/>
            <person name="Zwahlen M.-C."/>
            <person name="Desiere F."/>
            <person name="Bork P."/>
            <person name="Delley M."/>
            <person name="Pridmore R.D."/>
            <person name="Arigoni F."/>
        </authorList>
    </citation>
    <scope>NUCLEOTIDE SEQUENCE [LARGE SCALE GENOMIC DNA]</scope>
    <source>
        <strain>NCC 2705</strain>
    </source>
</reference>
<dbReference type="EC" id="2.5.1.145" evidence="1"/>
<dbReference type="EMBL" id="AE014295">
    <property type="protein sequence ID" value="AAN24571.1"/>
    <property type="molecule type" value="Genomic_DNA"/>
</dbReference>
<dbReference type="RefSeq" id="NP_695935.1">
    <property type="nucleotide sequence ID" value="NC_004307.2"/>
</dbReference>
<dbReference type="RefSeq" id="WP_007052284.1">
    <property type="nucleotide sequence ID" value="NC_004307.2"/>
</dbReference>
<dbReference type="SMR" id="Q8G692"/>
<dbReference type="STRING" id="206672.BL0754"/>
<dbReference type="EnsemblBacteria" id="AAN24571">
    <property type="protein sequence ID" value="AAN24571"/>
    <property type="gene ID" value="BL0754"/>
</dbReference>
<dbReference type="GeneID" id="69578089"/>
<dbReference type="KEGG" id="blo:BL0754"/>
<dbReference type="PATRIC" id="fig|206672.9.peg.453"/>
<dbReference type="HOGENOM" id="CLU_013386_2_0_11"/>
<dbReference type="OrthoDB" id="871140at2"/>
<dbReference type="PhylomeDB" id="Q8G692"/>
<dbReference type="UniPathway" id="UPA00664"/>
<dbReference type="Proteomes" id="UP000000439">
    <property type="component" value="Chromosome"/>
</dbReference>
<dbReference type="GO" id="GO:0005886">
    <property type="term" value="C:plasma membrane"/>
    <property type="evidence" value="ECO:0007669"/>
    <property type="project" value="UniProtKB-SubCell"/>
</dbReference>
<dbReference type="GO" id="GO:0008961">
    <property type="term" value="F:phosphatidylglycerol-prolipoprotein diacylglyceryl transferase activity"/>
    <property type="evidence" value="ECO:0007669"/>
    <property type="project" value="UniProtKB-UniRule"/>
</dbReference>
<dbReference type="GO" id="GO:0042158">
    <property type="term" value="P:lipoprotein biosynthetic process"/>
    <property type="evidence" value="ECO:0007669"/>
    <property type="project" value="UniProtKB-UniRule"/>
</dbReference>
<dbReference type="HAMAP" id="MF_01147">
    <property type="entry name" value="Lgt"/>
    <property type="match status" value="1"/>
</dbReference>
<dbReference type="InterPro" id="IPR001640">
    <property type="entry name" value="Lgt"/>
</dbReference>
<dbReference type="NCBIfam" id="TIGR00544">
    <property type="entry name" value="lgt"/>
    <property type="match status" value="1"/>
</dbReference>
<dbReference type="PANTHER" id="PTHR30589:SF0">
    <property type="entry name" value="PHOSPHATIDYLGLYCEROL--PROLIPOPROTEIN DIACYLGLYCERYL TRANSFERASE"/>
    <property type="match status" value="1"/>
</dbReference>
<dbReference type="PANTHER" id="PTHR30589">
    <property type="entry name" value="PROLIPOPROTEIN DIACYLGLYCERYL TRANSFERASE"/>
    <property type="match status" value="1"/>
</dbReference>
<dbReference type="Pfam" id="PF01790">
    <property type="entry name" value="LGT"/>
    <property type="match status" value="1"/>
</dbReference>
<dbReference type="PROSITE" id="PS01311">
    <property type="entry name" value="LGT"/>
    <property type="match status" value="1"/>
</dbReference>
<protein>
    <recommendedName>
        <fullName evidence="1">Phosphatidylglycerol--prolipoprotein diacylglyceryl transferase</fullName>
        <ecNumber evidence="1">2.5.1.145</ecNumber>
    </recommendedName>
</protein>
<organism>
    <name type="scientific">Bifidobacterium longum (strain NCC 2705)</name>
    <dbReference type="NCBI Taxonomy" id="206672"/>
    <lineage>
        <taxon>Bacteria</taxon>
        <taxon>Bacillati</taxon>
        <taxon>Actinomycetota</taxon>
        <taxon>Actinomycetes</taxon>
        <taxon>Bifidobacteriales</taxon>
        <taxon>Bifidobacteriaceae</taxon>
        <taxon>Bifidobacterium</taxon>
    </lineage>
</organism>
<sequence length="315" mass="35426">MNLAYIPSPTFSKFEIGPFTIHMYAICILIGICVAVWILATRWKRYGGTFDQILDTTLVTVPCALVGARLYHCITTPADYFPPTGNLVNILKVWEGGMAIFGGISVGTLVAFLWCRHKHYPFAIFADAIAPALPVAQAIGRLGNWFNQELYGWPTTLPWGLKLNDADAIGKSEICYSGAQCPDYRTTLFHPTFLYEMIWNLIGAALIIYLGHKLADRLKAGQQFAMYLMWYGLGRTWIENVRINYSTVILGLRTNVWTAIIVFVLGCILFVVLYQYGPDPKAQARGLAAVTADELERQSIEEEQLRQKKQTNRTK</sequence>
<proteinExistence type="inferred from homology"/>
<keyword id="KW-1003">Cell membrane</keyword>
<keyword id="KW-0472">Membrane</keyword>
<keyword id="KW-1185">Reference proteome</keyword>
<keyword id="KW-0808">Transferase</keyword>
<keyword id="KW-0812">Transmembrane</keyword>
<keyword id="KW-1133">Transmembrane helix</keyword>
<comment type="function">
    <text evidence="1">Catalyzes the transfer of the diacylglyceryl group from phosphatidylglycerol to the sulfhydryl group of the N-terminal cysteine of a prolipoprotein, the first step in the formation of mature lipoproteins.</text>
</comment>
<comment type="catalytic activity">
    <reaction evidence="1">
        <text>L-cysteinyl-[prolipoprotein] + a 1,2-diacyl-sn-glycero-3-phospho-(1'-sn-glycerol) = an S-1,2-diacyl-sn-glyceryl-L-cysteinyl-[prolipoprotein] + sn-glycerol 1-phosphate + H(+)</text>
        <dbReference type="Rhea" id="RHEA:56712"/>
        <dbReference type="Rhea" id="RHEA-COMP:14679"/>
        <dbReference type="Rhea" id="RHEA-COMP:14680"/>
        <dbReference type="ChEBI" id="CHEBI:15378"/>
        <dbReference type="ChEBI" id="CHEBI:29950"/>
        <dbReference type="ChEBI" id="CHEBI:57685"/>
        <dbReference type="ChEBI" id="CHEBI:64716"/>
        <dbReference type="ChEBI" id="CHEBI:140658"/>
        <dbReference type="EC" id="2.5.1.145"/>
    </reaction>
</comment>
<comment type="pathway">
    <text evidence="1">Protein modification; lipoprotein biosynthesis (diacylglyceryl transfer).</text>
</comment>
<comment type="subcellular location">
    <subcellularLocation>
        <location evidence="1">Cell membrane</location>
        <topology evidence="1">Multi-pass membrane protein</topology>
    </subcellularLocation>
</comment>
<comment type="similarity">
    <text evidence="1">Belongs to the Lgt family.</text>
</comment>
<gene>
    <name evidence="1" type="primary">lgt</name>
    <name type="ordered locus">BL0754</name>
</gene>
<evidence type="ECO:0000255" key="1">
    <source>
        <dbReference type="HAMAP-Rule" id="MF_01147"/>
    </source>
</evidence>
<accession>Q8G692</accession>
<name>LGT_BIFLO</name>